<feature type="chain" id="PRO_0000301387" description="Phosphoglucosamine mutase">
    <location>
        <begin position="1"/>
        <end position="451"/>
    </location>
</feature>
<feature type="active site" description="Phosphoserine intermediate" evidence="1">
    <location>
        <position position="101"/>
    </location>
</feature>
<feature type="binding site" description="via phosphate group" evidence="1">
    <location>
        <position position="101"/>
    </location>
    <ligand>
        <name>Mg(2+)</name>
        <dbReference type="ChEBI" id="CHEBI:18420"/>
    </ligand>
</feature>
<feature type="binding site" evidence="1">
    <location>
        <position position="240"/>
    </location>
    <ligand>
        <name>Mg(2+)</name>
        <dbReference type="ChEBI" id="CHEBI:18420"/>
    </ligand>
</feature>
<feature type="binding site" evidence="1">
    <location>
        <position position="242"/>
    </location>
    <ligand>
        <name>Mg(2+)</name>
        <dbReference type="ChEBI" id="CHEBI:18420"/>
    </ligand>
</feature>
<feature type="binding site" evidence="1">
    <location>
        <position position="244"/>
    </location>
    <ligand>
        <name>Mg(2+)</name>
        <dbReference type="ChEBI" id="CHEBI:18420"/>
    </ligand>
</feature>
<feature type="modified residue" description="Phosphoserine" evidence="1">
    <location>
        <position position="101"/>
    </location>
</feature>
<organism>
    <name type="scientific">Streptococcus pyogenes serotype M12 (strain MGAS2096)</name>
    <dbReference type="NCBI Taxonomy" id="370553"/>
    <lineage>
        <taxon>Bacteria</taxon>
        <taxon>Bacillati</taxon>
        <taxon>Bacillota</taxon>
        <taxon>Bacilli</taxon>
        <taxon>Lactobacillales</taxon>
        <taxon>Streptococcaceae</taxon>
        <taxon>Streptococcus</taxon>
    </lineage>
</organism>
<gene>
    <name evidence="1" type="primary">glmM</name>
    <name type="ordered locus">MGAS2096_Spy0837</name>
</gene>
<dbReference type="EC" id="5.4.2.10" evidence="1"/>
<dbReference type="EMBL" id="CP000261">
    <property type="protein sequence ID" value="ABF35889.1"/>
    <property type="molecule type" value="Genomic_DNA"/>
</dbReference>
<dbReference type="SMR" id="Q1JC19"/>
<dbReference type="KEGG" id="spj:MGAS2096_Spy0837"/>
<dbReference type="HOGENOM" id="CLU_016950_7_0_9"/>
<dbReference type="GO" id="GO:0005829">
    <property type="term" value="C:cytosol"/>
    <property type="evidence" value="ECO:0007669"/>
    <property type="project" value="TreeGrafter"/>
</dbReference>
<dbReference type="GO" id="GO:0000287">
    <property type="term" value="F:magnesium ion binding"/>
    <property type="evidence" value="ECO:0007669"/>
    <property type="project" value="UniProtKB-UniRule"/>
</dbReference>
<dbReference type="GO" id="GO:0008966">
    <property type="term" value="F:phosphoglucosamine mutase activity"/>
    <property type="evidence" value="ECO:0007669"/>
    <property type="project" value="UniProtKB-UniRule"/>
</dbReference>
<dbReference type="GO" id="GO:0004615">
    <property type="term" value="F:phosphomannomutase activity"/>
    <property type="evidence" value="ECO:0007669"/>
    <property type="project" value="TreeGrafter"/>
</dbReference>
<dbReference type="GO" id="GO:0005975">
    <property type="term" value="P:carbohydrate metabolic process"/>
    <property type="evidence" value="ECO:0007669"/>
    <property type="project" value="InterPro"/>
</dbReference>
<dbReference type="GO" id="GO:0009252">
    <property type="term" value="P:peptidoglycan biosynthetic process"/>
    <property type="evidence" value="ECO:0007669"/>
    <property type="project" value="TreeGrafter"/>
</dbReference>
<dbReference type="GO" id="GO:0006048">
    <property type="term" value="P:UDP-N-acetylglucosamine biosynthetic process"/>
    <property type="evidence" value="ECO:0007669"/>
    <property type="project" value="TreeGrafter"/>
</dbReference>
<dbReference type="CDD" id="cd05802">
    <property type="entry name" value="GlmM"/>
    <property type="match status" value="1"/>
</dbReference>
<dbReference type="FunFam" id="3.30.310.50:FF:000001">
    <property type="entry name" value="Phosphoglucosamine mutase"/>
    <property type="match status" value="1"/>
</dbReference>
<dbReference type="FunFam" id="3.40.120.10:FF:000001">
    <property type="entry name" value="Phosphoglucosamine mutase"/>
    <property type="match status" value="1"/>
</dbReference>
<dbReference type="FunFam" id="3.40.120.10:FF:000002">
    <property type="entry name" value="Phosphoglucosamine mutase"/>
    <property type="match status" value="1"/>
</dbReference>
<dbReference type="Gene3D" id="3.40.120.10">
    <property type="entry name" value="Alpha-D-Glucose-1,6-Bisphosphate, subunit A, domain 3"/>
    <property type="match status" value="3"/>
</dbReference>
<dbReference type="Gene3D" id="3.30.310.50">
    <property type="entry name" value="Alpha-D-phosphohexomutase, C-terminal domain"/>
    <property type="match status" value="1"/>
</dbReference>
<dbReference type="HAMAP" id="MF_01554_B">
    <property type="entry name" value="GlmM_B"/>
    <property type="match status" value="1"/>
</dbReference>
<dbReference type="InterPro" id="IPR005844">
    <property type="entry name" value="A-D-PHexomutase_a/b/a-I"/>
</dbReference>
<dbReference type="InterPro" id="IPR016055">
    <property type="entry name" value="A-D-PHexomutase_a/b/a-I/II/III"/>
</dbReference>
<dbReference type="InterPro" id="IPR005845">
    <property type="entry name" value="A-D-PHexomutase_a/b/a-II"/>
</dbReference>
<dbReference type="InterPro" id="IPR005846">
    <property type="entry name" value="A-D-PHexomutase_a/b/a-III"/>
</dbReference>
<dbReference type="InterPro" id="IPR005843">
    <property type="entry name" value="A-D-PHexomutase_C"/>
</dbReference>
<dbReference type="InterPro" id="IPR036900">
    <property type="entry name" value="A-D-PHexomutase_C_sf"/>
</dbReference>
<dbReference type="InterPro" id="IPR016066">
    <property type="entry name" value="A-D-PHexomutase_CS"/>
</dbReference>
<dbReference type="InterPro" id="IPR005841">
    <property type="entry name" value="Alpha-D-phosphohexomutase_SF"/>
</dbReference>
<dbReference type="InterPro" id="IPR006352">
    <property type="entry name" value="GlmM_bact"/>
</dbReference>
<dbReference type="InterPro" id="IPR050060">
    <property type="entry name" value="Phosphoglucosamine_mutase"/>
</dbReference>
<dbReference type="NCBIfam" id="TIGR01455">
    <property type="entry name" value="glmM"/>
    <property type="match status" value="1"/>
</dbReference>
<dbReference type="PANTHER" id="PTHR42946:SF1">
    <property type="entry name" value="PHOSPHOGLUCOMUTASE (ALPHA-D-GLUCOSE-1,6-BISPHOSPHATE-DEPENDENT)"/>
    <property type="match status" value="1"/>
</dbReference>
<dbReference type="PANTHER" id="PTHR42946">
    <property type="entry name" value="PHOSPHOHEXOSE MUTASE"/>
    <property type="match status" value="1"/>
</dbReference>
<dbReference type="Pfam" id="PF02878">
    <property type="entry name" value="PGM_PMM_I"/>
    <property type="match status" value="1"/>
</dbReference>
<dbReference type="Pfam" id="PF02879">
    <property type="entry name" value="PGM_PMM_II"/>
    <property type="match status" value="1"/>
</dbReference>
<dbReference type="Pfam" id="PF02880">
    <property type="entry name" value="PGM_PMM_III"/>
    <property type="match status" value="1"/>
</dbReference>
<dbReference type="Pfam" id="PF00408">
    <property type="entry name" value="PGM_PMM_IV"/>
    <property type="match status" value="1"/>
</dbReference>
<dbReference type="PRINTS" id="PR00509">
    <property type="entry name" value="PGMPMM"/>
</dbReference>
<dbReference type="SUPFAM" id="SSF55957">
    <property type="entry name" value="Phosphoglucomutase, C-terminal domain"/>
    <property type="match status" value="1"/>
</dbReference>
<dbReference type="SUPFAM" id="SSF53738">
    <property type="entry name" value="Phosphoglucomutase, first 3 domains"/>
    <property type="match status" value="3"/>
</dbReference>
<dbReference type="PROSITE" id="PS00710">
    <property type="entry name" value="PGM_PMM"/>
    <property type="match status" value="1"/>
</dbReference>
<sequence length="451" mass="48363">MGKYFGTDGVRGEANVELTPELAFKLGRFGGYVLSQHETERPKVFVARDTRISGEMLESALIAGLLSVGIEVYKLGVLATPGVSYLVRTEKASAGVMISASHNPALDNGIKFFGNDGFKLADDQELEIEALLDAPEDTLPRPSAEGLGTLVDYPEGLRKYEKFLVTTGTDLSGMTVALDTANGAASVSARDVFLDLNAEIAVIGEKPNGLNINDGVGSTHPEQLQELVKETGADLGLAFDGDSDRLIAVDETGEIVDGDRIIFIIGKYLSEKGLLAHNTIVTTVMSNLGFHKALDKQGINKAITAVGDRYVVEEMRSSGYNLGGEQSGHVIIMDYNTTGDGQLTAIQLAKVMKETGKSLSELAAEVTIYPQKLVNIRVENSMKDRAMEVPAIANIIAKMEDEMAGNGRILVRPSGTEPLLRVMAEAPTDAEVDYYVDTIADVVRTEIGCDN</sequence>
<protein>
    <recommendedName>
        <fullName evidence="1">Phosphoglucosamine mutase</fullName>
        <ecNumber evidence="1">5.4.2.10</ecNumber>
    </recommendedName>
</protein>
<comment type="function">
    <text evidence="1">Catalyzes the conversion of glucosamine-6-phosphate to glucosamine-1-phosphate.</text>
</comment>
<comment type="catalytic activity">
    <reaction evidence="1">
        <text>alpha-D-glucosamine 1-phosphate = D-glucosamine 6-phosphate</text>
        <dbReference type="Rhea" id="RHEA:23424"/>
        <dbReference type="ChEBI" id="CHEBI:58516"/>
        <dbReference type="ChEBI" id="CHEBI:58725"/>
        <dbReference type="EC" id="5.4.2.10"/>
    </reaction>
</comment>
<comment type="cofactor">
    <cofactor evidence="1">
        <name>Mg(2+)</name>
        <dbReference type="ChEBI" id="CHEBI:18420"/>
    </cofactor>
    <text evidence="1">Binds 1 Mg(2+) ion per subunit.</text>
</comment>
<comment type="PTM">
    <text evidence="1">Activated by phosphorylation.</text>
</comment>
<comment type="similarity">
    <text evidence="1">Belongs to the phosphohexose mutase family.</text>
</comment>
<name>GLMM_STRPB</name>
<keyword id="KW-0413">Isomerase</keyword>
<keyword id="KW-0460">Magnesium</keyword>
<keyword id="KW-0479">Metal-binding</keyword>
<keyword id="KW-0597">Phosphoprotein</keyword>
<proteinExistence type="inferred from homology"/>
<reference key="1">
    <citation type="journal article" date="2006" name="Proc. Natl. Acad. Sci. U.S.A.">
        <title>Molecular genetic anatomy of inter- and intraserotype variation in the human bacterial pathogen group A Streptococcus.</title>
        <authorList>
            <person name="Beres S.B."/>
            <person name="Richter E.W."/>
            <person name="Nagiec M.J."/>
            <person name="Sumby P."/>
            <person name="Porcella S.F."/>
            <person name="DeLeo F.R."/>
            <person name="Musser J.M."/>
        </authorList>
    </citation>
    <scope>NUCLEOTIDE SEQUENCE [LARGE SCALE GENOMIC DNA]</scope>
    <source>
        <strain>MGAS2096</strain>
    </source>
</reference>
<accession>Q1JC19</accession>
<evidence type="ECO:0000255" key="1">
    <source>
        <dbReference type="HAMAP-Rule" id="MF_01554"/>
    </source>
</evidence>